<accession>B7VHQ7</accession>
<protein>
    <recommendedName>
        <fullName evidence="1">Co-chaperonin GroES</fullName>
    </recommendedName>
    <alternativeName>
        <fullName evidence="1">10 kDa chaperonin</fullName>
    </alternativeName>
    <alternativeName>
        <fullName evidence="1">Chaperonin-10</fullName>
        <shortName evidence="1">Cpn10</shortName>
    </alternativeName>
</protein>
<reference key="1">
    <citation type="submission" date="2009-02" db="EMBL/GenBank/DDBJ databases">
        <title>Vibrio splendidus str. LGP32 complete genome.</title>
        <authorList>
            <person name="Mazel D."/>
            <person name="Le Roux F."/>
        </authorList>
    </citation>
    <scope>NUCLEOTIDE SEQUENCE [LARGE SCALE GENOMIC DNA]</scope>
    <source>
        <strain>LGP32</strain>
    </source>
</reference>
<sequence>MNIRPLHDRVIVERQEVESKSAGGIVLTGSAAEKSTRGTILAVGKGRILENGSLQPLDVKVGDTVIFAEDRGTRAEKIEGKEVLIMSEFNIMAIVE</sequence>
<keyword id="KW-0143">Chaperone</keyword>
<keyword id="KW-0963">Cytoplasm</keyword>
<evidence type="ECO:0000255" key="1">
    <source>
        <dbReference type="HAMAP-Rule" id="MF_00580"/>
    </source>
</evidence>
<dbReference type="EMBL" id="FM954972">
    <property type="protein sequence ID" value="CAV17269.1"/>
    <property type="molecule type" value="Genomic_DNA"/>
</dbReference>
<dbReference type="SMR" id="B7VHQ7"/>
<dbReference type="STRING" id="575788.VS_0238"/>
<dbReference type="KEGG" id="vsp:VS_0238"/>
<dbReference type="PATRIC" id="fig|575788.5.peg.1626"/>
<dbReference type="eggNOG" id="COG0234">
    <property type="taxonomic scope" value="Bacteria"/>
</dbReference>
<dbReference type="HOGENOM" id="CLU_132825_1_1_6"/>
<dbReference type="Proteomes" id="UP000009100">
    <property type="component" value="Chromosome 1"/>
</dbReference>
<dbReference type="GO" id="GO:0005737">
    <property type="term" value="C:cytoplasm"/>
    <property type="evidence" value="ECO:0007669"/>
    <property type="project" value="UniProtKB-SubCell"/>
</dbReference>
<dbReference type="GO" id="GO:0005524">
    <property type="term" value="F:ATP binding"/>
    <property type="evidence" value="ECO:0007669"/>
    <property type="project" value="InterPro"/>
</dbReference>
<dbReference type="GO" id="GO:0046872">
    <property type="term" value="F:metal ion binding"/>
    <property type="evidence" value="ECO:0007669"/>
    <property type="project" value="TreeGrafter"/>
</dbReference>
<dbReference type="GO" id="GO:0044183">
    <property type="term" value="F:protein folding chaperone"/>
    <property type="evidence" value="ECO:0007669"/>
    <property type="project" value="InterPro"/>
</dbReference>
<dbReference type="GO" id="GO:0051087">
    <property type="term" value="F:protein-folding chaperone binding"/>
    <property type="evidence" value="ECO:0007669"/>
    <property type="project" value="TreeGrafter"/>
</dbReference>
<dbReference type="GO" id="GO:0051082">
    <property type="term" value="F:unfolded protein binding"/>
    <property type="evidence" value="ECO:0007669"/>
    <property type="project" value="TreeGrafter"/>
</dbReference>
<dbReference type="GO" id="GO:0051085">
    <property type="term" value="P:chaperone cofactor-dependent protein refolding"/>
    <property type="evidence" value="ECO:0007669"/>
    <property type="project" value="TreeGrafter"/>
</dbReference>
<dbReference type="CDD" id="cd00320">
    <property type="entry name" value="cpn10"/>
    <property type="match status" value="1"/>
</dbReference>
<dbReference type="FunFam" id="2.30.33.40:FF:000001">
    <property type="entry name" value="10 kDa chaperonin"/>
    <property type="match status" value="1"/>
</dbReference>
<dbReference type="Gene3D" id="2.30.33.40">
    <property type="entry name" value="GroES chaperonin"/>
    <property type="match status" value="1"/>
</dbReference>
<dbReference type="HAMAP" id="MF_00580">
    <property type="entry name" value="CH10"/>
    <property type="match status" value="1"/>
</dbReference>
<dbReference type="InterPro" id="IPR020818">
    <property type="entry name" value="Chaperonin_GroES"/>
</dbReference>
<dbReference type="InterPro" id="IPR037124">
    <property type="entry name" value="Chaperonin_GroES_sf"/>
</dbReference>
<dbReference type="InterPro" id="IPR018369">
    <property type="entry name" value="Chaprnonin_Cpn10_CS"/>
</dbReference>
<dbReference type="InterPro" id="IPR011032">
    <property type="entry name" value="GroES-like_sf"/>
</dbReference>
<dbReference type="NCBIfam" id="NF001526">
    <property type="entry name" value="PRK00364.1-1"/>
    <property type="match status" value="1"/>
</dbReference>
<dbReference type="NCBIfam" id="NF001531">
    <property type="entry name" value="PRK00364.2-2"/>
    <property type="match status" value="1"/>
</dbReference>
<dbReference type="PANTHER" id="PTHR10772">
    <property type="entry name" value="10 KDA HEAT SHOCK PROTEIN"/>
    <property type="match status" value="1"/>
</dbReference>
<dbReference type="PANTHER" id="PTHR10772:SF58">
    <property type="entry name" value="CO-CHAPERONIN GROES"/>
    <property type="match status" value="1"/>
</dbReference>
<dbReference type="Pfam" id="PF00166">
    <property type="entry name" value="Cpn10"/>
    <property type="match status" value="1"/>
</dbReference>
<dbReference type="PRINTS" id="PR00297">
    <property type="entry name" value="CHAPERONIN10"/>
</dbReference>
<dbReference type="SMART" id="SM00883">
    <property type="entry name" value="Cpn10"/>
    <property type="match status" value="1"/>
</dbReference>
<dbReference type="SUPFAM" id="SSF50129">
    <property type="entry name" value="GroES-like"/>
    <property type="match status" value="1"/>
</dbReference>
<dbReference type="PROSITE" id="PS00681">
    <property type="entry name" value="CHAPERONINS_CPN10"/>
    <property type="match status" value="1"/>
</dbReference>
<proteinExistence type="inferred from homology"/>
<name>CH10_VIBA3</name>
<feature type="chain" id="PRO_1000146925" description="Co-chaperonin GroES">
    <location>
        <begin position="1"/>
        <end position="96"/>
    </location>
</feature>
<organism>
    <name type="scientific">Vibrio atlanticus (strain LGP32)</name>
    <name type="common">Vibrio splendidus (strain Mel32)</name>
    <dbReference type="NCBI Taxonomy" id="575788"/>
    <lineage>
        <taxon>Bacteria</taxon>
        <taxon>Pseudomonadati</taxon>
        <taxon>Pseudomonadota</taxon>
        <taxon>Gammaproteobacteria</taxon>
        <taxon>Vibrionales</taxon>
        <taxon>Vibrionaceae</taxon>
        <taxon>Vibrio</taxon>
    </lineage>
</organism>
<gene>
    <name evidence="1" type="primary">groES</name>
    <name evidence="1" type="synonym">groS</name>
    <name type="ordered locus">VS_0238</name>
</gene>
<comment type="function">
    <text evidence="1">Together with the chaperonin GroEL, plays an essential role in assisting protein folding. The GroEL-GroES system forms a nano-cage that allows encapsulation of the non-native substrate proteins and provides a physical environment optimized to promote and accelerate protein folding. GroES binds to the apical surface of the GroEL ring, thereby capping the opening of the GroEL channel.</text>
</comment>
<comment type="subunit">
    <text evidence="1">Heptamer of 7 subunits arranged in a ring. Interacts with the chaperonin GroEL.</text>
</comment>
<comment type="subcellular location">
    <subcellularLocation>
        <location evidence="1">Cytoplasm</location>
    </subcellularLocation>
</comment>
<comment type="similarity">
    <text evidence="1">Belongs to the GroES chaperonin family.</text>
</comment>